<protein>
    <recommendedName>
        <fullName>Putative non-structural protein 4</fullName>
        <shortName>NS4</shortName>
    </recommendedName>
</protein>
<sequence>MQMEFKEELCDMFSQIWDHIPDSQNFSEEIIVDEKIETVPMDVPAIVTHSTNVKLLEEMDVEIVHGLNPIKTLMFDGINDDDEQGNVGETRDEGYYTVEPIDEFVKTKTVQTLKSLRRKRGVTSQDGADDTNKHDNMHMMLQNGHTSIQSIEIEHDNAVPLSGVVIDNILNKYGQDKIFNLRKHNQYGTIYHISDVNMLCEELICNATQLNLPAAAVRRITFEFCRWLNETELLKLQCNQLEKFVSVDSTEWFKLPVSLYFDIPIMAKLLNIPYNLIIIREGVLFQLLSLSDTTFELQQVEHLDFHTNQILAIIIDDHVTVPLLPLKKLWNISDLAKNTDLPLDLCEDVSSYFKEEDKAINTYITPYIDPRIIFIAHRNPTDFMFMLPNIPYLTEVNSEIQIDKLSDVCEFEYNRYRKALFCVENLIEIHRWHSLVCFIHLLANGELTQSEQIFIAGISRTNEYYVELSPRDCLYNTIRASFSAYQAWFKDWRANRKIQKIQNNGNDSLHTVIEVKSQQECPNIEQNTSINVNNLFFNTIIKYLDHEQHRFNFSDFNQQIAHGHFEALHASVEFVSEIQITREFCDVIRSNLPLNLDIISLYSKSLSDYLKMDLVVYFPEYNELRLIDATKQFKIRFIEFNCTKKTITMFKYTTTFHASMQKSYNYQVSISNGMSNKEMFITCFKKESNLAVVKQFSLRNNHRYDGIIDQPNIIGKGRPNYPNTKEQSVDHHPKISQVKHASVEQGHLINNYDLMKFALCHQNYKRIFNNQLFSEAPISDESLFRLKLEVNTGQHILAFTHVSFYEDGKVKTTYVTFITVDIDCSHVHQALLPRCVFHIQKGKPILYAANKTFVTGGSERRIEVVFNHLKEYIKETGIRSRDIHTLNSKSDQLITTCLTPFILSSMSMRKALQDNGDLSFTSQCVRKCQMSFKDDRINLPCGTSVHESTVDLHKHACLLEYYRLGLYKEKNNMNRCGFSCVECHSRYPNQLCANVCRLICQGM</sequence>
<feature type="chain" id="PRO_0000403278" description="Putative non-structural protein 4">
    <location>
        <begin position="1"/>
        <end position="1003"/>
    </location>
</feature>
<gene>
    <name type="primary">S4</name>
</gene>
<reference key="1">
    <citation type="journal article" date="2005" name="Virology">
        <title>Expansion of family Reoviridae to include nine-segmented dsRNA viruses: isolation and characterization of a new virus designated Aedes pseudoscutellaris reovirus assigned to a proposed genus (Dinovernavirus).</title>
        <authorList>
            <person name="Attoui H."/>
            <person name="Mohd Jaafar F."/>
            <person name="Belhouchet M."/>
            <person name="Biagini P."/>
            <person name="Cantaloube J.F."/>
            <person name="de Micco P."/>
            <person name="de Lamballerie X."/>
        </authorList>
    </citation>
    <scope>NUCLEOTIDE SEQUENCE [GENOMIC RNA]</scope>
</reference>
<name>VP4_APRVF</name>
<proteinExistence type="predicted"/>
<organismHost>
    <name type="scientific">Aedes pseudoscutellaris</name>
    <name type="common">Mosquito</name>
    <name type="synonym">Stegomyia pseudoscutellaris</name>
    <dbReference type="NCBI Taxonomy" id="316597"/>
</organismHost>
<accession>Q2Y0E7</accession>
<dbReference type="EMBL" id="DQ087279">
    <property type="protein sequence ID" value="AAZ94071.1"/>
    <property type="molecule type" value="Genomic_RNA"/>
</dbReference>
<dbReference type="RefSeq" id="YP_443938.1">
    <property type="nucleotide sequence ID" value="NC_007669.1"/>
</dbReference>
<dbReference type="KEGG" id="vg:5076691"/>
<dbReference type="Proteomes" id="UP000001676">
    <property type="component" value="Genome"/>
</dbReference>
<keyword id="KW-1185">Reference proteome</keyword>
<organism>
    <name type="scientific">Aedes pseudoscutellaris reovirus (isolate France)</name>
    <name type="common">ApRV</name>
    <dbReference type="NCBI Taxonomy" id="648170"/>
    <lineage>
        <taxon>Viruses</taxon>
        <taxon>Riboviria</taxon>
        <taxon>Orthornavirae</taxon>
        <taxon>Duplornaviricota</taxon>
        <taxon>Resentoviricetes</taxon>
        <taxon>Reovirales</taxon>
        <taxon>Spinareoviridae</taxon>
        <taxon>Dinovernavirus</taxon>
        <taxon>Aedes pseudoscutellaris reovirus</taxon>
    </lineage>
</organism>